<name>MEK2_CAEEL</name>
<evidence type="ECO:0000250" key="1"/>
<evidence type="ECO:0000255" key="2">
    <source>
        <dbReference type="PROSITE-ProRule" id="PRU00159"/>
    </source>
</evidence>
<evidence type="ECO:0000255" key="3">
    <source>
        <dbReference type="PROSITE-ProRule" id="PRU10027"/>
    </source>
</evidence>
<evidence type="ECO:0000256" key="4">
    <source>
        <dbReference type="SAM" id="MobiDB-lite"/>
    </source>
</evidence>
<evidence type="ECO:0000269" key="5">
    <source>
    </source>
</evidence>
<evidence type="ECO:0000269" key="6">
    <source>
    </source>
</evidence>
<evidence type="ECO:0000269" key="7">
    <source>
    </source>
</evidence>
<evidence type="ECO:0000269" key="8">
    <source>
    </source>
</evidence>
<evidence type="ECO:0000269" key="9">
    <source>
    </source>
</evidence>
<evidence type="ECO:0000269" key="10">
    <source>
    </source>
</evidence>
<evidence type="ECO:0000305" key="11"/>
<dbReference type="EC" id="2.7.12.2"/>
<dbReference type="EMBL" id="U21107">
    <property type="protein sequence ID" value="AAA85118.1"/>
    <property type="molecule type" value="mRNA"/>
</dbReference>
<dbReference type="EMBL" id="FO081804">
    <property type="protein sequence ID" value="CCD73487.1"/>
    <property type="molecule type" value="Genomic_DNA"/>
</dbReference>
<dbReference type="PIR" id="A56466">
    <property type="entry name" value="A56466"/>
</dbReference>
<dbReference type="RefSeq" id="NP_491087.1">
    <property type="nucleotide sequence ID" value="NM_058686.5"/>
</dbReference>
<dbReference type="SMR" id="Q10664"/>
<dbReference type="BioGRID" id="37349">
    <property type="interactions" value="18"/>
</dbReference>
<dbReference type="FunCoup" id="Q10664">
    <property type="interactions" value="2959"/>
</dbReference>
<dbReference type="IntAct" id="Q10664">
    <property type="interactions" value="3"/>
</dbReference>
<dbReference type="MINT" id="Q10664"/>
<dbReference type="STRING" id="6239.Y54E10BL.6.1"/>
<dbReference type="iPTMnet" id="Q10664"/>
<dbReference type="PaxDb" id="6239-Y54E10BL.6"/>
<dbReference type="PeptideAtlas" id="Q10664"/>
<dbReference type="EnsemblMetazoa" id="Y54E10BL.6.1">
    <property type="protein sequence ID" value="Y54E10BL.6.1"/>
    <property type="gene ID" value="WBGene00003186"/>
</dbReference>
<dbReference type="GeneID" id="171872"/>
<dbReference type="KEGG" id="cel:CELE_Y54E10BL.6"/>
<dbReference type="UCSC" id="Y54E10BL.6">
    <property type="organism name" value="c. elegans"/>
</dbReference>
<dbReference type="AGR" id="WB:WBGene00003186"/>
<dbReference type="CTD" id="171872"/>
<dbReference type="WormBase" id="Y54E10BL.6">
    <property type="protein sequence ID" value="CE25437"/>
    <property type="gene ID" value="WBGene00003186"/>
    <property type="gene designation" value="mek-2"/>
</dbReference>
<dbReference type="eggNOG" id="KOG0581">
    <property type="taxonomic scope" value="Eukaryota"/>
</dbReference>
<dbReference type="GeneTree" id="ENSGT00940000153487"/>
<dbReference type="HOGENOM" id="CLU_000288_63_23_1"/>
<dbReference type="InParanoid" id="Q10664"/>
<dbReference type="OMA" id="QMTLTEP"/>
<dbReference type="OrthoDB" id="10252354at2759"/>
<dbReference type="PhylomeDB" id="Q10664"/>
<dbReference type="BRENDA" id="2.7.12.2">
    <property type="organism ID" value="1045"/>
</dbReference>
<dbReference type="Reactome" id="R-CEL-110056">
    <property type="pathway name" value="MAPK3 (ERK1) activation"/>
</dbReference>
<dbReference type="Reactome" id="R-CEL-112411">
    <property type="pathway name" value="MAPK1 (ERK2) activation"/>
</dbReference>
<dbReference type="Reactome" id="R-CEL-170968">
    <property type="pathway name" value="Frs2-mediated activation"/>
</dbReference>
<dbReference type="Reactome" id="R-CEL-445144">
    <property type="pathway name" value="Signal transduction by L1"/>
</dbReference>
<dbReference type="Reactome" id="R-CEL-5674135">
    <property type="pathway name" value="MAP2K and MAPK activation"/>
</dbReference>
<dbReference type="Reactome" id="R-CEL-5674499">
    <property type="pathway name" value="Negative feedback regulation of MAPK pathway"/>
</dbReference>
<dbReference type="SignaLink" id="Q10664"/>
<dbReference type="PRO" id="PR:Q10664"/>
<dbReference type="Proteomes" id="UP000001940">
    <property type="component" value="Chromosome I"/>
</dbReference>
<dbReference type="Bgee" id="WBGene00003186">
    <property type="expression patterns" value="Expressed in pharyngeal muscle cell (C elegans) and 3 other cell types or tissues"/>
</dbReference>
<dbReference type="GO" id="GO:0005524">
    <property type="term" value="F:ATP binding"/>
    <property type="evidence" value="ECO:0007669"/>
    <property type="project" value="UniProtKB-KW"/>
</dbReference>
<dbReference type="GO" id="GO:0004708">
    <property type="term" value="F:MAP kinase kinase activity"/>
    <property type="evidence" value="ECO:0000318"/>
    <property type="project" value="GO_Central"/>
</dbReference>
<dbReference type="GO" id="GO:0106310">
    <property type="term" value="F:protein serine kinase activity"/>
    <property type="evidence" value="ECO:0007669"/>
    <property type="project" value="RHEA"/>
</dbReference>
<dbReference type="GO" id="GO:0004674">
    <property type="term" value="F:protein serine/threonine kinase activity"/>
    <property type="evidence" value="ECO:0007669"/>
    <property type="project" value="UniProtKB-KW"/>
</dbReference>
<dbReference type="GO" id="GO:0004712">
    <property type="term" value="F:protein serine/threonine/tyrosine kinase activity"/>
    <property type="evidence" value="ECO:0000314"/>
    <property type="project" value="WormBase"/>
</dbReference>
<dbReference type="GO" id="GO:0004713">
    <property type="term" value="F:protein tyrosine kinase activity"/>
    <property type="evidence" value="ECO:0007669"/>
    <property type="project" value="UniProtKB-KW"/>
</dbReference>
<dbReference type="GO" id="GO:0097110">
    <property type="term" value="F:scaffold protein binding"/>
    <property type="evidence" value="ECO:0000353"/>
    <property type="project" value="UniProtKB"/>
</dbReference>
<dbReference type="GO" id="GO:0050830">
    <property type="term" value="P:defense response to Gram-positive bacterium"/>
    <property type="evidence" value="ECO:0000315"/>
    <property type="project" value="UniProtKB"/>
</dbReference>
<dbReference type="GO" id="GO:0000165">
    <property type="term" value="P:MAPK cascade"/>
    <property type="evidence" value="ECO:0000315"/>
    <property type="project" value="UniProtKB"/>
</dbReference>
<dbReference type="GO" id="GO:0051321">
    <property type="term" value="P:meiotic cell cycle"/>
    <property type="evidence" value="ECO:0007669"/>
    <property type="project" value="UniProtKB-KW"/>
</dbReference>
<dbReference type="GO" id="GO:0048477">
    <property type="term" value="P:oogenesis"/>
    <property type="evidence" value="ECO:0007669"/>
    <property type="project" value="UniProtKB-KW"/>
</dbReference>
<dbReference type="GO" id="GO:0007265">
    <property type="term" value="P:Ras protein signal transduction"/>
    <property type="evidence" value="ECO:0000316"/>
    <property type="project" value="WormBase"/>
</dbReference>
<dbReference type="GO" id="GO:0040025">
    <property type="term" value="P:vulval development"/>
    <property type="evidence" value="ECO:0000316"/>
    <property type="project" value="WormBase"/>
</dbReference>
<dbReference type="CDD" id="cd06615">
    <property type="entry name" value="PKc_MEK"/>
    <property type="match status" value="1"/>
</dbReference>
<dbReference type="FunFam" id="3.30.200.20:FF:000040">
    <property type="entry name" value="Dual specificity mitogen-activated protein kinase kinase"/>
    <property type="match status" value="1"/>
</dbReference>
<dbReference type="FunFam" id="1.10.510.10:FF:000115">
    <property type="entry name" value="Dual specificity mitogen-activated protein kinase kinase 1"/>
    <property type="match status" value="1"/>
</dbReference>
<dbReference type="Gene3D" id="3.30.200.20">
    <property type="entry name" value="Phosphorylase Kinase, domain 1"/>
    <property type="match status" value="1"/>
</dbReference>
<dbReference type="Gene3D" id="1.10.510.10">
    <property type="entry name" value="Transferase(Phosphotransferase) domain 1"/>
    <property type="match status" value="1"/>
</dbReference>
<dbReference type="InterPro" id="IPR011009">
    <property type="entry name" value="Kinase-like_dom_sf"/>
</dbReference>
<dbReference type="InterPro" id="IPR050915">
    <property type="entry name" value="MAP_kinase_kinase"/>
</dbReference>
<dbReference type="InterPro" id="IPR000719">
    <property type="entry name" value="Prot_kinase_dom"/>
</dbReference>
<dbReference type="InterPro" id="IPR017441">
    <property type="entry name" value="Protein_kinase_ATP_BS"/>
</dbReference>
<dbReference type="InterPro" id="IPR008271">
    <property type="entry name" value="Ser/Thr_kinase_AS"/>
</dbReference>
<dbReference type="PANTHER" id="PTHR47448">
    <property type="entry name" value="DUAL SPECIFICITY MITOGEN-ACTIVATED PROTEIN KINASE KINASE DSOR1-LIKE PROTEIN"/>
    <property type="match status" value="1"/>
</dbReference>
<dbReference type="PANTHER" id="PTHR47448:SF1">
    <property type="entry name" value="SERINE_THREONINE-PROTEIN KINASE STE7 HOMOLOG"/>
    <property type="match status" value="1"/>
</dbReference>
<dbReference type="Pfam" id="PF00069">
    <property type="entry name" value="Pkinase"/>
    <property type="match status" value="1"/>
</dbReference>
<dbReference type="SMART" id="SM00220">
    <property type="entry name" value="S_TKc"/>
    <property type="match status" value="1"/>
</dbReference>
<dbReference type="SUPFAM" id="SSF56112">
    <property type="entry name" value="Protein kinase-like (PK-like)"/>
    <property type="match status" value="1"/>
</dbReference>
<dbReference type="PROSITE" id="PS00107">
    <property type="entry name" value="PROTEIN_KINASE_ATP"/>
    <property type="match status" value="1"/>
</dbReference>
<dbReference type="PROSITE" id="PS50011">
    <property type="entry name" value="PROTEIN_KINASE_DOM"/>
    <property type="match status" value="1"/>
</dbReference>
<dbReference type="PROSITE" id="PS00108">
    <property type="entry name" value="PROTEIN_KINASE_ST"/>
    <property type="match status" value="1"/>
</dbReference>
<accession>Q10664</accession>
<comment type="function">
    <text evidence="6 7 8 9 10">Functions in the let-60 Ras signaling pathway; acts downstream of lin-45 raf kinase, but before the sur-1/mpk-1 gene product in controlling vulval cell differentiation (PubMed:7729690). Required for progression of developing oocytes through the pachytene stage (PubMed:19826475). Plays a role in responses to M.nematophilum-mediated bacterial infection by promoting tail swelling and preventing constipation (PubMed:15268855). Involved in fluid homeostasis (PubMed:11689700). Positively regulates lifespan upstream of mpk-1 (PubMed:20624915).</text>
</comment>
<comment type="catalytic activity">
    <reaction>
        <text>L-seryl-[protein] + ATP = O-phospho-L-seryl-[protein] + ADP + H(+)</text>
        <dbReference type="Rhea" id="RHEA:17989"/>
        <dbReference type="Rhea" id="RHEA-COMP:9863"/>
        <dbReference type="Rhea" id="RHEA-COMP:11604"/>
        <dbReference type="ChEBI" id="CHEBI:15378"/>
        <dbReference type="ChEBI" id="CHEBI:29999"/>
        <dbReference type="ChEBI" id="CHEBI:30616"/>
        <dbReference type="ChEBI" id="CHEBI:83421"/>
        <dbReference type="ChEBI" id="CHEBI:456216"/>
        <dbReference type="EC" id="2.7.12.2"/>
    </reaction>
</comment>
<comment type="catalytic activity">
    <reaction>
        <text>L-threonyl-[protein] + ATP = O-phospho-L-threonyl-[protein] + ADP + H(+)</text>
        <dbReference type="Rhea" id="RHEA:46608"/>
        <dbReference type="Rhea" id="RHEA-COMP:11060"/>
        <dbReference type="Rhea" id="RHEA-COMP:11605"/>
        <dbReference type="ChEBI" id="CHEBI:15378"/>
        <dbReference type="ChEBI" id="CHEBI:30013"/>
        <dbReference type="ChEBI" id="CHEBI:30616"/>
        <dbReference type="ChEBI" id="CHEBI:61977"/>
        <dbReference type="ChEBI" id="CHEBI:456216"/>
        <dbReference type="EC" id="2.7.12.2"/>
    </reaction>
</comment>
<comment type="catalytic activity">
    <reaction>
        <text>L-tyrosyl-[protein] + ATP = O-phospho-L-tyrosyl-[protein] + ADP + H(+)</text>
        <dbReference type="Rhea" id="RHEA:10596"/>
        <dbReference type="Rhea" id="RHEA-COMP:10136"/>
        <dbReference type="Rhea" id="RHEA-COMP:20101"/>
        <dbReference type="ChEBI" id="CHEBI:15378"/>
        <dbReference type="ChEBI" id="CHEBI:30616"/>
        <dbReference type="ChEBI" id="CHEBI:46858"/>
        <dbReference type="ChEBI" id="CHEBI:61978"/>
        <dbReference type="ChEBI" id="CHEBI:456216"/>
        <dbReference type="EC" id="2.7.12.2"/>
    </reaction>
</comment>
<comment type="activity regulation">
    <text>Activated by tyrosine and threonine phosphorylation catalyzed by MAP kinase kinase kinases.</text>
</comment>
<comment type="subunit">
    <text evidence="5">Interacts with ksr-1.</text>
</comment>
<comment type="disruption phenotype">
    <text evidence="8 9">RNAi-mediated knockdown causes a defect in pachytene progression resulting in a proximal gonad devoid of nuclei. The phenotype is more severe in gck-1 km15 mutant background (PubMed:19826475). RNAi-mediated knockdown in adults decreases lifespan (PubMed:20624915).</text>
</comment>
<comment type="similarity">
    <text evidence="11">Belongs to the protein kinase superfamily. STE Ser/Thr protein kinase family. MAP kinase kinase subfamily.</text>
</comment>
<keyword id="KW-0067">ATP-binding</keyword>
<keyword id="KW-0217">Developmental protein</keyword>
<keyword id="KW-0221">Differentiation</keyword>
<keyword id="KW-0418">Kinase</keyword>
<keyword id="KW-0469">Meiosis</keyword>
<keyword id="KW-0547">Nucleotide-binding</keyword>
<keyword id="KW-0896">Oogenesis</keyword>
<keyword id="KW-0597">Phosphoprotein</keyword>
<keyword id="KW-1185">Reference proteome</keyword>
<keyword id="KW-0723">Serine/threonine-protein kinase</keyword>
<keyword id="KW-0808">Transferase</keyword>
<keyword id="KW-0829">Tyrosine-protein kinase</keyword>
<protein>
    <recommendedName>
        <fullName>Dual specificity mitogen-activated protein kinase kinase mek-2</fullName>
        <shortName>MAP kinase kinase mek-2</shortName>
        <ecNumber>2.7.12.2</ecNumber>
    </recommendedName>
</protein>
<reference key="1">
    <citation type="journal article" date="1995" name="Genes Dev.">
        <title>MEK-2, a Caenorhabditis elegans MAP kinase kinase, functions in Ras-mediated vulval induction and other developmental events.</title>
        <authorList>
            <person name="Wu Y."/>
            <person name="Han M."/>
            <person name="Guan K.-L."/>
        </authorList>
    </citation>
    <scope>NUCLEOTIDE SEQUENCE [MRNA]</scope>
    <scope>MUTAGENESIS OF PRO-237 AND GLU-238</scope>
</reference>
<reference key="2">
    <citation type="journal article" date="1998" name="Science">
        <title>Genome sequence of the nematode C. elegans: a platform for investigating biology.</title>
        <authorList>
            <consortium name="The C. elegans sequencing consortium"/>
        </authorList>
    </citation>
    <scope>NUCLEOTIDE SEQUENCE [LARGE SCALE GENOMIC DNA]</scope>
    <source>
        <strain>Bristol N2</strain>
    </source>
</reference>
<reference key="3">
    <citation type="journal article" date="1999" name="Mol. Cell. Biol.">
        <title>Kinase suppressor of Ras forms a multiprotein signaling complex and modulates MEK localization.</title>
        <authorList>
            <person name="Stewart S."/>
            <person name="Sundaram M."/>
            <person name="Zhang Y."/>
            <person name="Lee J."/>
            <person name="Han M."/>
            <person name="Guan K.L."/>
        </authorList>
    </citation>
    <scope>INTERACTION WITH KSR-1</scope>
</reference>
<reference key="4">
    <citation type="journal article" date="2001" name="Mol. Cell. Biol.">
        <title>The Caenorhabditis elegans EGL-15 signaling pathway implicates a DOS-like multisubstrate adaptor protein in fibroblast growth factor signal transduction.</title>
        <authorList>
            <person name="Schutzman J.L."/>
            <person name="Borland C.Z."/>
            <person name="Newman J.C."/>
            <person name="Robinson M.K."/>
            <person name="Kokel M."/>
            <person name="Stern M.J."/>
        </authorList>
    </citation>
    <scope>FUNCTION</scope>
    <scope>MUTAGENESIS OF ASP-213</scope>
    <source>
        <strain>Bristol N2</strain>
    </source>
</reference>
<reference key="5">
    <citation type="journal article" date="2004" name="Curr. Biol.">
        <title>The ERK MAP kinase cascade mediates tail swelling and a protective response to rectal infection in C. elegans.</title>
        <authorList>
            <person name="Nicholas H.R."/>
            <person name="Hodgkin J."/>
        </authorList>
    </citation>
    <scope>FUNCTION</scope>
    <scope>MUTAGENESIS OF SER-217; SER-223 AND SER-227</scope>
</reference>
<reference key="6">
    <citation type="journal article" date="2009" name="PLoS ONE">
        <title>The germinal center kinase GCK-1 is a negative regulator of MAP kinase activation and apoptosis in the C. elegans germline.</title>
        <authorList>
            <person name="Schouest K.R."/>
            <person name="Kurasawa Y."/>
            <person name="Furuta T."/>
            <person name="Hisamoto N."/>
            <person name="Matsumoto K."/>
            <person name="Schumacher J.M."/>
        </authorList>
    </citation>
    <scope>FUNCTION</scope>
    <scope>DISRUPTION PHENOTYPE</scope>
</reference>
<reference key="7">
    <citation type="journal article" date="2010" name="J. Biol. Chem.">
        <title>The ERK-MAPK pathway regulates longevity through SKN-1 and insulin-like signaling in Caenorhabditis elegans.</title>
        <authorList>
            <person name="Okuyama T."/>
            <person name="Inoue H."/>
            <person name="Ookuma S."/>
            <person name="Satoh T."/>
            <person name="Kano K."/>
            <person name="Honjoh S."/>
            <person name="Hisamoto N."/>
            <person name="Matsumoto K."/>
            <person name="Nishida E."/>
        </authorList>
    </citation>
    <scope>FUNCTION</scope>
    <scope>DISRUPTION PHENOTYPE</scope>
</reference>
<organism>
    <name type="scientific">Caenorhabditis elegans</name>
    <dbReference type="NCBI Taxonomy" id="6239"/>
    <lineage>
        <taxon>Eukaryota</taxon>
        <taxon>Metazoa</taxon>
        <taxon>Ecdysozoa</taxon>
        <taxon>Nematoda</taxon>
        <taxon>Chromadorea</taxon>
        <taxon>Rhabditida</taxon>
        <taxon>Rhabditina</taxon>
        <taxon>Rhabditomorpha</taxon>
        <taxon>Rhabditoidea</taxon>
        <taxon>Rhabditidae</taxon>
        <taxon>Peloderinae</taxon>
        <taxon>Caenorhabditis</taxon>
    </lineage>
</organism>
<sequence>MSSGKRRNPLGLSLPPTVNEQSESGEATAEEATATVPLEEQLKKLGLTEPQTQRLSEFLQVKEGIKELSEDMLQTEGELGHGNGGVVNKCVHRKTGVIMARKLVHLEIKPSVRQQIVKELAVLHKCNSPFIVGFYGAFVDNNDISICMEYMDGLSLDIVLKKVGRLPEKFVGRISVAVVRGLTYLKDEIKILHRDVKPSNMLVNSNGEIKLCDFGVSGMLIDSMANSFVGTRSYMAPERLTGSHYTISSDIWSFGLSLVELLIGRYPVPAPSQAEYATMFNVAENEIELADSLEEPNYHPPSNPASMAIFEMLDYIVNGPPPTLPKRFFTDEVIGFVSKCLRKLPSERATLKSLTADVFFTQYADHDDQGEFAVFVKGTINLPKLNP</sequence>
<proteinExistence type="evidence at protein level"/>
<gene>
    <name type="primary">mek-2</name>
    <name type="ORF">Y54E10BL.6</name>
</gene>
<feature type="chain" id="PRO_0000086322" description="Dual specificity mitogen-activated protein kinase kinase mek-2">
    <location>
        <begin position="1"/>
        <end position="387"/>
    </location>
</feature>
<feature type="domain" description="Protein kinase" evidence="2">
    <location>
        <begin position="73"/>
        <end position="360"/>
    </location>
</feature>
<feature type="region of interest" description="Disordered" evidence="4">
    <location>
        <begin position="1"/>
        <end position="37"/>
    </location>
</feature>
<feature type="compositionally biased region" description="Polar residues" evidence="4">
    <location>
        <begin position="16"/>
        <end position="25"/>
    </location>
</feature>
<feature type="compositionally biased region" description="Low complexity" evidence="4">
    <location>
        <begin position="26"/>
        <end position="35"/>
    </location>
</feature>
<feature type="active site" description="Proton acceptor" evidence="2 3">
    <location>
        <position position="195"/>
    </location>
</feature>
<feature type="binding site" evidence="2">
    <location>
        <begin position="79"/>
        <end position="87"/>
    </location>
    <ligand>
        <name>ATP</name>
        <dbReference type="ChEBI" id="CHEBI:30616"/>
    </ligand>
</feature>
<feature type="binding site" evidence="2">
    <location>
        <position position="102"/>
    </location>
    <ligand>
        <name>ATP</name>
        <dbReference type="ChEBI" id="CHEBI:30616"/>
    </ligand>
</feature>
<feature type="modified residue" description="Phosphoserine" evidence="1">
    <location>
        <position position="223"/>
    </location>
</feature>
<feature type="modified residue" description="Phosphoserine" evidence="1">
    <location>
        <position position="227"/>
    </location>
</feature>
<feature type="mutagenesis site" description="In n2678; rescues fluid accumulation in crl-1 e1745ts mutant." evidence="6">
    <original>D</original>
    <variation>N</variation>
    <location>
        <position position="213"/>
    </location>
</feature>
<feature type="mutagenesis site" description="In n1989; severe constipation following M.nematophilium infection." evidence="7">
    <original>S</original>
    <variation>F</variation>
    <location>
        <position position="217"/>
    </location>
</feature>
<feature type="mutagenesis site" description="Phosphomimetic mutant which, in a wild type background, induces tail swelling; in association with D-227.">
    <original>S</original>
    <variation>E</variation>
    <location>
        <position position="223"/>
    </location>
</feature>
<feature type="mutagenesis site" description="Phosphomimetic mutant which, in a wild type background, induces tail swelling; in association with E-223." evidence="7">
    <original>S</original>
    <variation>D</variation>
    <location>
        <position position="227"/>
    </location>
</feature>
<feature type="mutagenesis site" description="In KU114; 8% larval lethality." evidence="10">
    <original>P</original>
    <variation>S</variation>
    <location>
        <position position="237"/>
    </location>
</feature>
<feature type="mutagenesis site" description="In H294; 100% larval lethality." evidence="10">
    <original>E</original>
    <variation>K</variation>
    <location>
        <position position="238"/>
    </location>
</feature>